<dbReference type="EC" id="2.5.1.27"/>
<dbReference type="EMBL" id="X00010">
    <property type="protein sequence ID" value="CAA24911.1"/>
    <property type="molecule type" value="Genomic_DNA"/>
</dbReference>
<dbReference type="EMBL" id="X00493">
    <property type="protein sequence ID" value="CAA25170.1"/>
    <property type="molecule type" value="Genomic_DNA"/>
</dbReference>
<dbReference type="PIR" id="A00589">
    <property type="entry name" value="JJAG5T"/>
</dbReference>
<dbReference type="RefSeq" id="NP_059677.1">
    <property type="nucleotide sequence ID" value="NC_002377.1"/>
</dbReference>
<dbReference type="SMR" id="P03869"/>
<dbReference type="GO" id="GO:0009824">
    <property type="term" value="F:AMP dimethylallyltransferase activity"/>
    <property type="evidence" value="ECO:0007669"/>
    <property type="project" value="UniProtKB-EC"/>
</dbReference>
<dbReference type="GO" id="GO:0009691">
    <property type="term" value="P:cytokinin biosynthetic process"/>
    <property type="evidence" value="ECO:0007669"/>
    <property type="project" value="UniProtKB-KW"/>
</dbReference>
<dbReference type="Gene3D" id="1.10.287.890">
    <property type="entry name" value="Crystal structure of tRNA isopentenylpyrophosphate transferase (bh2366) domain"/>
    <property type="match status" value="1"/>
</dbReference>
<dbReference type="Gene3D" id="3.40.50.300">
    <property type="entry name" value="P-loop containing nucleotide triphosphate hydrolases"/>
    <property type="match status" value="1"/>
</dbReference>
<dbReference type="InterPro" id="IPR027417">
    <property type="entry name" value="P-loop_NTPase"/>
</dbReference>
<dbReference type="InterPro" id="IPR002648">
    <property type="entry name" value="Tzs"/>
</dbReference>
<dbReference type="Pfam" id="PF01745">
    <property type="entry name" value="IPT"/>
    <property type="match status" value="1"/>
</dbReference>
<dbReference type="PIRSF" id="PIRSF000507">
    <property type="entry name" value="IPT"/>
    <property type="match status" value="1"/>
</dbReference>
<dbReference type="SUPFAM" id="SSF52540">
    <property type="entry name" value="P-loop containing nucleoside triphosphate hydrolases"/>
    <property type="match status" value="1"/>
</dbReference>
<protein>
    <recommendedName>
        <fullName>Adenylate dimethylallyltransferase</fullName>
        <ecNumber>2.5.1.27</ecNumber>
    </recommendedName>
    <alternativeName>
        <fullName>Dimethylallyl transferase</fullName>
    </alternativeName>
    <alternativeName>
        <fullName>Isopentenyl transferase</fullName>
    </alternativeName>
</protein>
<gene>
    <name type="primary">izt</name>
    <name type="synonym">tmr</name>
</gene>
<accession>P03869</accession>
<comment type="function">
    <text evidence="1">Transfers dimethylallyl groups to AMP as part of the biosynthesis of cytokinin phytohormones.</text>
</comment>
<comment type="catalytic activity">
    <reaction>
        <text>dimethylallyl diphosphate + AMP = N(6)-(dimethylallyl)adenosine 5'-phosphate + diphosphate</text>
        <dbReference type="Rhea" id="RHEA:15285"/>
        <dbReference type="ChEBI" id="CHEBI:33019"/>
        <dbReference type="ChEBI" id="CHEBI:57526"/>
        <dbReference type="ChEBI" id="CHEBI:57623"/>
        <dbReference type="ChEBI" id="CHEBI:456215"/>
        <dbReference type="EC" id="2.5.1.27"/>
    </reaction>
</comment>
<comment type="similarity">
    <text evidence="2">Belongs to the isopentenyl transferase family.</text>
</comment>
<feature type="chain" id="PRO_0000216431" description="Adenylate dimethylallyltransferase">
    <location>
        <begin position="1"/>
        <end position="240"/>
    </location>
</feature>
<reference key="1">
    <citation type="journal article" date="1983" name="Nucleic Acids Res.">
        <title>Nucleotide sequence of the Agrobacterium tumefaciens octopine Ti plasmid-encoded tmr gene.</title>
        <authorList>
            <person name="Heidekamp F."/>
            <person name="Dirkse W.G."/>
            <person name="Hille J."/>
            <person name="van Ormondt H."/>
        </authorList>
    </citation>
    <scope>NUCLEOTIDE SEQUENCE [GENOMIC DNA]</scope>
</reference>
<reference key="2">
    <citation type="journal article" date="1984" name="EMBO J.">
        <title>The complete nucleotide sequence of the TL-DNA of the Agrobacterium tumefaciens plasmid pTiAch5.</title>
        <authorList>
            <person name="Gielen J."/>
            <person name="de Beuckeleer M."/>
            <person name="Seurinck J."/>
            <person name="Deboeck F."/>
            <person name="de Greve H."/>
            <person name="Lemmers M."/>
            <person name="van Montagu M."/>
            <person name="Schell J."/>
        </authorList>
    </citation>
    <scope>NUCLEOTIDE SEQUENCE [GENOMIC DNA]</scope>
</reference>
<keyword id="KW-0192">Crown gall tumor</keyword>
<keyword id="KW-0203">Cytokinin biosynthesis</keyword>
<keyword id="KW-0614">Plasmid</keyword>
<keyword id="KW-0808">Transferase</keyword>
<organism>
    <name type="scientific">Agrobacterium tumefaciens (strain Ach5)</name>
    <dbReference type="NCBI Taxonomy" id="176298"/>
    <lineage>
        <taxon>Bacteria</taxon>
        <taxon>Pseudomonadati</taxon>
        <taxon>Pseudomonadota</taxon>
        <taxon>Alphaproteobacteria</taxon>
        <taxon>Hyphomicrobiales</taxon>
        <taxon>Rhizobiaceae</taxon>
        <taxon>Rhizobium/Agrobacterium group</taxon>
        <taxon>Agrobacterium</taxon>
        <taxon>Agrobacterium tumefaciens complex</taxon>
    </lineage>
</organism>
<sequence length="240" mass="27004">MDLHLIFGPTCTGKTTTAIALAQQTGLPVLSLDRVQCCPQLSTGSGRPTVEELKGTTRLYLDDRPLVEGIIAAKQAHHRLIEEVYNHEANGGLILEGGSTSLLNCMARNSYWSADFRWHIIRHKLPDQETFMKAAKARVKQMLHPAAGHSIIQELVYLWNEPRLRPILKEIDGYRYAMLFASQNQITADMLLQLDANMEGKLINGIAQEYFIHARQQEQKFPQVNAAAFDGFEGHPFGMY</sequence>
<proteinExistence type="inferred from homology"/>
<name>IPT_AGRT4</name>
<geneLocation type="plasmid">
    <name>pTiAch5</name>
</geneLocation>
<evidence type="ECO:0000250" key="1"/>
<evidence type="ECO:0000305" key="2"/>